<accession>Q887Q7</accession>
<protein>
    <recommendedName>
        <fullName>Probable alginate O-acetylase AlgJ</fullName>
        <ecNumber>2.3.1.-</ecNumber>
    </recommendedName>
    <alternativeName>
        <fullName>Alginate biosynthesis protein AlgJ</fullName>
    </alternativeName>
</protein>
<reference key="1">
    <citation type="journal article" date="2003" name="Proc. Natl. Acad. Sci. U.S.A.">
        <title>The complete genome sequence of the Arabidopsis and tomato pathogen Pseudomonas syringae pv. tomato DC3000.</title>
        <authorList>
            <person name="Buell C.R."/>
            <person name="Joardar V."/>
            <person name="Lindeberg M."/>
            <person name="Selengut J."/>
            <person name="Paulsen I.T."/>
            <person name="Gwinn M.L."/>
            <person name="Dodson R.J."/>
            <person name="DeBoy R.T."/>
            <person name="Durkin A.S."/>
            <person name="Kolonay J.F."/>
            <person name="Madupu R."/>
            <person name="Daugherty S.C."/>
            <person name="Brinkac L.M."/>
            <person name="Beanan M.J."/>
            <person name="Haft D.H."/>
            <person name="Nelson W.C."/>
            <person name="Davidsen T.M."/>
            <person name="Zafar N."/>
            <person name="Zhou L."/>
            <person name="Liu J."/>
            <person name="Yuan Q."/>
            <person name="Khouri H.M."/>
            <person name="Fedorova N.B."/>
            <person name="Tran B."/>
            <person name="Russell D."/>
            <person name="Berry K.J."/>
            <person name="Utterback T.R."/>
            <person name="Van Aken S.E."/>
            <person name="Feldblyum T.V."/>
            <person name="D'Ascenzo M."/>
            <person name="Deng W.-L."/>
            <person name="Ramos A.R."/>
            <person name="Alfano J.R."/>
            <person name="Cartinhour S."/>
            <person name="Chatterjee A.K."/>
            <person name="Delaney T.P."/>
            <person name="Lazarowitz S.G."/>
            <person name="Martin G.B."/>
            <person name="Schneider D.J."/>
            <person name="Tang X."/>
            <person name="Bender C.L."/>
            <person name="White O."/>
            <person name="Fraser C.M."/>
            <person name="Collmer A."/>
        </authorList>
    </citation>
    <scope>NUCLEOTIDE SEQUENCE [LARGE SCALE GENOMIC DNA]</scope>
    <source>
        <strain>ATCC BAA-871 / DC3000</strain>
    </source>
</reference>
<keyword id="KW-0012">Acyltransferase</keyword>
<keyword id="KW-0016">Alginate biosynthesis</keyword>
<keyword id="KW-0997">Cell inner membrane</keyword>
<keyword id="KW-1003">Cell membrane</keyword>
<keyword id="KW-0472">Membrane</keyword>
<keyword id="KW-0574">Periplasm</keyword>
<keyword id="KW-1185">Reference proteome</keyword>
<keyword id="KW-0732">Signal</keyword>
<keyword id="KW-0808">Transferase</keyword>
<evidence type="ECO:0000250" key="1"/>
<evidence type="ECO:0000255" key="2"/>
<evidence type="ECO:0000305" key="3"/>
<dbReference type="EC" id="2.3.1.-"/>
<dbReference type="EMBL" id="AE016853">
    <property type="protein sequence ID" value="AAO54759.1"/>
    <property type="molecule type" value="Genomic_DNA"/>
</dbReference>
<dbReference type="RefSeq" id="NP_791064.1">
    <property type="nucleotide sequence ID" value="NC_004578.1"/>
</dbReference>
<dbReference type="RefSeq" id="WP_011103480.1">
    <property type="nucleotide sequence ID" value="NC_004578.1"/>
</dbReference>
<dbReference type="SMR" id="Q887Q7"/>
<dbReference type="STRING" id="223283.PSPTO_1234"/>
<dbReference type="GeneID" id="1182870"/>
<dbReference type="KEGG" id="pst:PSPTO_1234"/>
<dbReference type="PATRIC" id="fig|223283.9.peg.1255"/>
<dbReference type="eggNOG" id="ENOG502Z851">
    <property type="taxonomic scope" value="Bacteria"/>
</dbReference>
<dbReference type="HOGENOM" id="CLU_057510_0_0_6"/>
<dbReference type="OrthoDB" id="9760774at2"/>
<dbReference type="PhylomeDB" id="Q887Q7"/>
<dbReference type="UniPathway" id="UPA00286"/>
<dbReference type="Proteomes" id="UP000002515">
    <property type="component" value="Chromosome"/>
</dbReference>
<dbReference type="GO" id="GO:0042597">
    <property type="term" value="C:periplasmic space"/>
    <property type="evidence" value="ECO:0007669"/>
    <property type="project" value="UniProtKB-SubCell"/>
</dbReference>
<dbReference type="GO" id="GO:0005886">
    <property type="term" value="C:plasma membrane"/>
    <property type="evidence" value="ECO:0007669"/>
    <property type="project" value="UniProtKB-SubCell"/>
</dbReference>
<dbReference type="GO" id="GO:0016746">
    <property type="term" value="F:acyltransferase activity"/>
    <property type="evidence" value="ECO:0007669"/>
    <property type="project" value="UniProtKB-KW"/>
</dbReference>
<dbReference type="GO" id="GO:0042121">
    <property type="term" value="P:alginic acid biosynthetic process"/>
    <property type="evidence" value="ECO:0007669"/>
    <property type="project" value="UniProtKB-UniPathway"/>
</dbReference>
<dbReference type="CDD" id="cd14442">
    <property type="entry name" value="AlgJ_like"/>
    <property type="match status" value="1"/>
</dbReference>
<dbReference type="InterPro" id="IPR034657">
    <property type="entry name" value="AlgJ"/>
</dbReference>
<dbReference type="InterPro" id="IPR031811">
    <property type="entry name" value="ALGX/ALGJ_SGNH-like"/>
</dbReference>
<dbReference type="Pfam" id="PF16822">
    <property type="entry name" value="ALGX"/>
    <property type="match status" value="1"/>
</dbReference>
<comment type="function">
    <text evidence="1">Together with AlgI and AlgF, forms an inner membrane complex which probably interacts with the alginate polymerization-transport complex and adds acetyl groups at the O-2 and O-3 positions of mannuronate residues. Acetylation of alginate is important for the architecture of biofilms and increases the ability of alginate to act as a defense barrier (By similarity).</text>
</comment>
<comment type="pathway">
    <text>Glycan biosynthesis; alginate biosynthesis.</text>
</comment>
<comment type="subcellular location">
    <subcellularLocation>
        <location evidence="1">Cell inner membrane</location>
        <topology evidence="1">Peripheral membrane protein</topology>
        <orientation evidence="1">Periplasmic side</orientation>
    </subcellularLocation>
    <subcellularLocation>
        <location evidence="1">Periplasm</location>
    </subcellularLocation>
</comment>
<comment type="similarity">
    <text evidence="3">Belongs to the AlgJ family.</text>
</comment>
<feature type="signal peptide" evidence="2">
    <location>
        <begin position="1"/>
        <end position="35"/>
    </location>
</feature>
<feature type="chain" id="PRO_0000001123" description="Probable alginate O-acetylase AlgJ">
    <location>
        <begin position="36"/>
        <end position="391"/>
    </location>
</feature>
<feature type="active site" evidence="1">
    <location>
        <position position="190"/>
    </location>
</feature>
<feature type="active site" description="Proton acceptor" evidence="1">
    <location>
        <position position="192"/>
    </location>
</feature>
<feature type="active site" description="Nucleophile" evidence="1">
    <location>
        <position position="288"/>
    </location>
</feature>
<organism>
    <name type="scientific">Pseudomonas syringae pv. tomato (strain ATCC BAA-871 / DC3000)</name>
    <dbReference type="NCBI Taxonomy" id="223283"/>
    <lineage>
        <taxon>Bacteria</taxon>
        <taxon>Pseudomonadati</taxon>
        <taxon>Pseudomonadota</taxon>
        <taxon>Gammaproteobacteria</taxon>
        <taxon>Pseudomonadales</taxon>
        <taxon>Pseudomonadaceae</taxon>
        <taxon>Pseudomonas</taxon>
    </lineage>
</organism>
<sequence length="391" mass="42964">MTRSLRILYIAIFLGILLILGAWSLRSFSNFSTSAETTVLNGKWTKAAETHYDDEFPIKRLGTNLWAALDFKLFNEGRPGVVLGKDQWLYTDEEFDAVANGEQNEADNLALIQGVRDALEKQGSKLVLAIVPAKTRLYPEHIGDNKPASLHADLYQQFHAQVAKAGIFAPDLLAPLQAAKQQGQVFLRTDTHWTPMGAEVAAQQLGAAIAQKAPLEGEPEQFVTQAIETAPYKGDLTTFLPLDPLFSNLLPKPDELQKRSTDPVAGEAAGGDALFADSDVAVGLVGTSYSANPNWNFVGALKQALRSDVVNYAEDGHGPILPMLKYLQTDAFKNTPPQVVIWEFPERYLPAHNDLGEFDPKWIAELKKSRDTQENVALNAKPSESPNRAQN</sequence>
<gene>
    <name type="primary">algJ</name>
    <name type="ordered locus">PSPTO_1234</name>
</gene>
<name>ALGJ_PSESM</name>
<proteinExistence type="inferred from homology"/>